<reference key="1">
    <citation type="journal article" date="1999" name="Hum. Mol. Genet.">
        <title>Cloning and characterization of a secreted frizzled-related protein that is expressed by the retinal pigment epithelium.</title>
        <authorList>
            <person name="Chang J.T."/>
            <person name="Esumi N."/>
            <person name="Moore K."/>
            <person name="Li Y."/>
            <person name="Zhang S."/>
            <person name="Chew C."/>
            <person name="Goodman B."/>
            <person name="Rattner A."/>
            <person name="Moody S."/>
            <person name="Stetten G."/>
            <person name="Campochiaro P.A."/>
            <person name="Zack D.J."/>
        </authorList>
    </citation>
    <scope>NUCLEOTIDE SEQUENCE [GENOMIC DNA / MRNA]</scope>
    <source>
        <tissue>Retina</tissue>
    </source>
</reference>
<reference key="2">
    <citation type="journal article" date="2004" name="Genome Res.">
        <title>The status, quality, and expansion of the NIH full-length cDNA project: the Mammalian Gene Collection (MGC).</title>
        <authorList>
            <consortium name="The MGC Project Team"/>
        </authorList>
    </citation>
    <scope>NUCLEOTIDE SEQUENCE [LARGE SCALE MRNA]</scope>
    <source>
        <strain>C57BL/6J</strain>
        <tissue>Mammary gland</tissue>
    </source>
</reference>
<keyword id="KW-0217">Developmental protein</keyword>
<keyword id="KW-0221">Differentiation</keyword>
<keyword id="KW-1015">Disulfide bond</keyword>
<keyword id="KW-1185">Reference proteome</keyword>
<keyword id="KW-0964">Secreted</keyword>
<keyword id="KW-0732">Signal</keyword>
<keyword id="KW-0879">Wnt signaling pathway</keyword>
<organism>
    <name type="scientific">Mus musculus</name>
    <name type="common">Mouse</name>
    <dbReference type="NCBI Taxonomy" id="10090"/>
    <lineage>
        <taxon>Eukaryota</taxon>
        <taxon>Metazoa</taxon>
        <taxon>Chordata</taxon>
        <taxon>Craniata</taxon>
        <taxon>Vertebrata</taxon>
        <taxon>Euteleostomi</taxon>
        <taxon>Mammalia</taxon>
        <taxon>Eutheria</taxon>
        <taxon>Euarchontoglires</taxon>
        <taxon>Glires</taxon>
        <taxon>Rodentia</taxon>
        <taxon>Myomorpha</taxon>
        <taxon>Muroidea</taxon>
        <taxon>Muridae</taxon>
        <taxon>Murinae</taxon>
        <taxon>Mus</taxon>
        <taxon>Mus</taxon>
    </lineage>
</organism>
<sequence length="314" mass="35382">MWVAWSARTAALALLLGALHGAPTRGQEYDYYGWQAEPLHGRSYSKPPQCLDIPADLPLCHTVGYKRMRLPNLLEHESLAEVKQQASSWLPLLAKRCHSDTQVFLCSLFAPVCLDRPIYPCRSLCEAARAGCAPLMEAYGFPWPEMLHCHKFPLDNDLCIAVQFGHLPATAPPVTKICAQCEMEHSADGLMEQMCSSDFVVKMRIKEIKIDNGDRKLIGAQKKKKLLKAGPLKRKDTKKLVLHMKNGASCPCPQLDNLTGSFLVMGRKVEGQLLLTAVYRWDKKNKEMKFAVKFMFSYPCSLYYPFFYGAAEPH</sequence>
<accession>Q9WU66</accession>
<accession>Q8K269</accession>
<comment type="function">
    <text>Soluble frizzled-related proteins (sFRPS) function as modulators of Wnt signaling through direct interaction with Wnts. They have a role in regulating cell growth and differentiation in specific cell types. SFRP5 may be involved in determining the polarity of photoreceptor, and perhaps, other cells in the retina.</text>
</comment>
<comment type="subcellular location">
    <subcellularLocation>
        <location evidence="1">Secreted</location>
    </subcellularLocation>
</comment>
<comment type="domain">
    <text evidence="1">The FZ domain is involved in binding with Wnt ligands.</text>
</comment>
<comment type="similarity">
    <text evidence="5">Belongs to the secreted frizzled-related protein (sFRP) family.</text>
</comment>
<protein>
    <recommendedName>
        <fullName>Secreted frizzled-related protein 5</fullName>
        <shortName>sFRP-5</shortName>
    </recommendedName>
</protein>
<name>SFRP5_MOUSE</name>
<dbReference type="EMBL" id="AF117759">
    <property type="protein sequence ID" value="AAD25053.1"/>
    <property type="molecule type" value="mRNA"/>
</dbReference>
<dbReference type="EMBL" id="BC032921">
    <property type="protein sequence ID" value="AAH32921.1"/>
    <property type="molecule type" value="mRNA"/>
</dbReference>
<dbReference type="CCDS" id="CCDS29826.1"/>
<dbReference type="RefSeq" id="NP_061250.2">
    <property type="nucleotide sequence ID" value="NM_018780.3"/>
</dbReference>
<dbReference type="SMR" id="Q9WU66"/>
<dbReference type="BioGRID" id="207687">
    <property type="interactions" value="2"/>
</dbReference>
<dbReference type="FunCoup" id="Q9WU66">
    <property type="interactions" value="467"/>
</dbReference>
<dbReference type="STRING" id="10090.ENSMUSP00000018966"/>
<dbReference type="iPTMnet" id="Q9WU66"/>
<dbReference type="PhosphoSitePlus" id="Q9WU66"/>
<dbReference type="PaxDb" id="10090-ENSMUSP00000018966"/>
<dbReference type="ProteomicsDB" id="256630"/>
<dbReference type="DNASU" id="54612"/>
<dbReference type="GeneID" id="54612"/>
<dbReference type="KEGG" id="mmu:54612"/>
<dbReference type="UCSC" id="uc008hnl.2">
    <property type="organism name" value="mouse"/>
</dbReference>
<dbReference type="AGR" id="MGI:1860298"/>
<dbReference type="CTD" id="6425"/>
<dbReference type="MGI" id="MGI:1860298">
    <property type="gene designation" value="Sfrp5"/>
</dbReference>
<dbReference type="eggNOG" id="KOG3577">
    <property type="taxonomic scope" value="Eukaryota"/>
</dbReference>
<dbReference type="InParanoid" id="Q9WU66"/>
<dbReference type="OrthoDB" id="5985572at2759"/>
<dbReference type="PhylomeDB" id="Q9WU66"/>
<dbReference type="TreeFam" id="TF350133"/>
<dbReference type="BioGRID-ORCS" id="54612">
    <property type="hits" value="5 hits in 78 CRISPR screens"/>
</dbReference>
<dbReference type="ChiTaRS" id="Sfrp5">
    <property type="organism name" value="mouse"/>
</dbReference>
<dbReference type="PRO" id="PR:Q9WU66"/>
<dbReference type="Proteomes" id="UP000000589">
    <property type="component" value="Unplaced"/>
</dbReference>
<dbReference type="RNAct" id="Q9WU66">
    <property type="molecule type" value="protein"/>
</dbReference>
<dbReference type="GO" id="GO:0005576">
    <property type="term" value="C:extracellular region"/>
    <property type="evidence" value="ECO:0007669"/>
    <property type="project" value="UniProtKB-SubCell"/>
</dbReference>
<dbReference type="GO" id="GO:0030154">
    <property type="term" value="P:cell differentiation"/>
    <property type="evidence" value="ECO:0007669"/>
    <property type="project" value="UniProtKB-KW"/>
</dbReference>
<dbReference type="GO" id="GO:0060028">
    <property type="term" value="P:convergent extension involved in axis elongation"/>
    <property type="evidence" value="ECO:0000316"/>
    <property type="project" value="MGI"/>
</dbReference>
<dbReference type="GO" id="GO:0048546">
    <property type="term" value="P:digestive tract morphogenesis"/>
    <property type="evidence" value="ECO:0000316"/>
    <property type="project" value="MGI"/>
</dbReference>
<dbReference type="GO" id="GO:0030178">
    <property type="term" value="P:negative regulation of Wnt signaling pathway"/>
    <property type="evidence" value="ECO:0000266"/>
    <property type="project" value="MGI"/>
</dbReference>
<dbReference type="GO" id="GO:0036342">
    <property type="term" value="P:post-anal tail morphogenesis"/>
    <property type="evidence" value="ECO:0000316"/>
    <property type="project" value="MGI"/>
</dbReference>
<dbReference type="GO" id="GO:0090175">
    <property type="term" value="P:regulation of establishment of planar polarity"/>
    <property type="evidence" value="ECO:0000316"/>
    <property type="project" value="MGI"/>
</dbReference>
<dbReference type="GO" id="GO:0016055">
    <property type="term" value="P:Wnt signaling pathway"/>
    <property type="evidence" value="ECO:0007669"/>
    <property type="project" value="UniProtKB-KW"/>
</dbReference>
<dbReference type="CDD" id="cd07444">
    <property type="entry name" value="CRD_SFRP5"/>
    <property type="match status" value="1"/>
</dbReference>
<dbReference type="CDD" id="cd03580">
    <property type="entry name" value="NTR_Sfrp1_like"/>
    <property type="match status" value="1"/>
</dbReference>
<dbReference type="FunFam" id="1.10.2000.10:FF:000001">
    <property type="entry name" value="secreted frizzled-related protein 2"/>
    <property type="match status" value="1"/>
</dbReference>
<dbReference type="FunFam" id="2.40.50.120:FF:000014">
    <property type="entry name" value="Secreted frizzled-related protein 5"/>
    <property type="match status" value="1"/>
</dbReference>
<dbReference type="Gene3D" id="2.40.50.120">
    <property type="match status" value="1"/>
</dbReference>
<dbReference type="Gene3D" id="1.10.2000.10">
    <property type="entry name" value="Frizzled cysteine-rich domain"/>
    <property type="match status" value="1"/>
</dbReference>
<dbReference type="InterPro" id="IPR015526">
    <property type="entry name" value="Frizzled/SFRP"/>
</dbReference>
<dbReference type="InterPro" id="IPR020067">
    <property type="entry name" value="Frizzled_dom"/>
</dbReference>
<dbReference type="InterPro" id="IPR036790">
    <property type="entry name" value="Frizzled_dom_sf"/>
</dbReference>
<dbReference type="InterPro" id="IPR001134">
    <property type="entry name" value="Netrin_domain"/>
</dbReference>
<dbReference type="InterPro" id="IPR018933">
    <property type="entry name" value="Netrin_module_non-TIMP"/>
</dbReference>
<dbReference type="InterPro" id="IPR041761">
    <property type="entry name" value="SFRP5_CRD"/>
</dbReference>
<dbReference type="InterPro" id="IPR008993">
    <property type="entry name" value="TIMP-like_OB-fold"/>
</dbReference>
<dbReference type="PANTHER" id="PTHR11309">
    <property type="entry name" value="FRIZZLED"/>
    <property type="match status" value="1"/>
</dbReference>
<dbReference type="PANTHER" id="PTHR11309:SF46">
    <property type="entry name" value="SECRETED FRIZZLED-RELATED PROTEIN 5"/>
    <property type="match status" value="1"/>
</dbReference>
<dbReference type="Pfam" id="PF01392">
    <property type="entry name" value="Fz"/>
    <property type="match status" value="1"/>
</dbReference>
<dbReference type="Pfam" id="PF01759">
    <property type="entry name" value="NTR"/>
    <property type="match status" value="1"/>
</dbReference>
<dbReference type="SMART" id="SM00643">
    <property type="entry name" value="C345C"/>
    <property type="match status" value="1"/>
</dbReference>
<dbReference type="SMART" id="SM00063">
    <property type="entry name" value="FRI"/>
    <property type="match status" value="1"/>
</dbReference>
<dbReference type="SUPFAM" id="SSF63501">
    <property type="entry name" value="Frizzled cysteine-rich domain"/>
    <property type="match status" value="1"/>
</dbReference>
<dbReference type="SUPFAM" id="SSF50242">
    <property type="entry name" value="TIMP-like"/>
    <property type="match status" value="1"/>
</dbReference>
<dbReference type="PROSITE" id="PS50038">
    <property type="entry name" value="FZ"/>
    <property type="match status" value="1"/>
</dbReference>
<dbReference type="PROSITE" id="PS50189">
    <property type="entry name" value="NTR"/>
    <property type="match status" value="1"/>
</dbReference>
<feature type="signal peptide" evidence="2">
    <location>
        <begin position="1"/>
        <end position="21"/>
    </location>
</feature>
<feature type="chain" id="PRO_0000032556" description="Secreted frizzled-related protein 5">
    <location>
        <begin position="22"/>
        <end position="314"/>
    </location>
</feature>
<feature type="domain" description="FZ" evidence="3">
    <location>
        <begin position="45"/>
        <end position="162"/>
    </location>
</feature>
<feature type="domain" description="NTR" evidence="4">
    <location>
        <begin position="178"/>
        <end position="300"/>
    </location>
</feature>
<feature type="disulfide bond" evidence="1">
    <location>
        <begin position="50"/>
        <end position="113"/>
    </location>
</feature>
<feature type="disulfide bond" evidence="1">
    <location>
        <begin position="60"/>
        <end position="106"/>
    </location>
</feature>
<feature type="disulfide bond" evidence="1">
    <location>
        <begin position="97"/>
        <end position="132"/>
    </location>
</feature>
<feature type="disulfide bond" evidence="1">
    <location>
        <begin position="121"/>
        <end position="159"/>
    </location>
</feature>
<feature type="disulfide bond" evidence="1">
    <location>
        <begin position="125"/>
        <end position="149"/>
    </location>
</feature>
<feature type="disulfide bond" evidence="1">
    <location>
        <begin position="178"/>
        <end position="250"/>
    </location>
</feature>
<feature type="disulfide bond" evidence="1">
    <location>
        <begin position="181"/>
        <end position="252"/>
    </location>
</feature>
<feature type="disulfide bond" evidence="1">
    <location>
        <begin position="195"/>
        <end position="300"/>
    </location>
</feature>
<feature type="sequence conflict" description="In Ref. 2; AAH32921." evidence="5" ref="2">
    <original>A</original>
    <variation>V</variation>
    <location>
        <position position="128"/>
    </location>
</feature>
<evidence type="ECO:0000250" key="1"/>
<evidence type="ECO:0000255" key="2"/>
<evidence type="ECO:0000255" key="3">
    <source>
        <dbReference type="PROSITE-ProRule" id="PRU00090"/>
    </source>
</evidence>
<evidence type="ECO:0000255" key="4">
    <source>
        <dbReference type="PROSITE-ProRule" id="PRU00295"/>
    </source>
</evidence>
<evidence type="ECO:0000305" key="5"/>
<proteinExistence type="evidence at transcript level"/>
<gene>
    <name type="primary">Sfrp5</name>
</gene>